<organism>
    <name type="scientific">Shewanella sp. (strain ANA-3)</name>
    <dbReference type="NCBI Taxonomy" id="94122"/>
    <lineage>
        <taxon>Bacteria</taxon>
        <taxon>Pseudomonadati</taxon>
        <taxon>Pseudomonadota</taxon>
        <taxon>Gammaproteobacteria</taxon>
        <taxon>Alteromonadales</taxon>
        <taxon>Shewanellaceae</taxon>
        <taxon>Shewanella</taxon>
    </lineage>
</organism>
<protein>
    <recommendedName>
        <fullName evidence="1">Dihydroxy-acid dehydratase</fullName>
        <shortName evidence="1">DAD</shortName>
        <ecNumber evidence="1">4.2.1.9</ecNumber>
    </recommendedName>
</protein>
<feature type="chain" id="PRO_1000001056" description="Dihydroxy-acid dehydratase">
    <location>
        <begin position="1"/>
        <end position="619"/>
    </location>
</feature>
<feature type="active site" description="Proton acceptor" evidence="1">
    <location>
        <position position="520"/>
    </location>
</feature>
<feature type="binding site" evidence="1">
    <location>
        <position position="81"/>
    </location>
    <ligand>
        <name>Mg(2+)</name>
        <dbReference type="ChEBI" id="CHEBI:18420"/>
    </ligand>
</feature>
<feature type="binding site" evidence="1">
    <location>
        <position position="122"/>
    </location>
    <ligand>
        <name>[2Fe-2S] cluster</name>
        <dbReference type="ChEBI" id="CHEBI:190135"/>
    </ligand>
</feature>
<feature type="binding site" evidence="1">
    <location>
        <position position="123"/>
    </location>
    <ligand>
        <name>Mg(2+)</name>
        <dbReference type="ChEBI" id="CHEBI:18420"/>
    </ligand>
</feature>
<feature type="binding site" description="via carbamate group" evidence="1">
    <location>
        <position position="124"/>
    </location>
    <ligand>
        <name>Mg(2+)</name>
        <dbReference type="ChEBI" id="CHEBI:18420"/>
    </ligand>
</feature>
<feature type="binding site" evidence="1">
    <location>
        <position position="195"/>
    </location>
    <ligand>
        <name>[2Fe-2S] cluster</name>
        <dbReference type="ChEBI" id="CHEBI:190135"/>
    </ligand>
</feature>
<feature type="binding site" evidence="1">
    <location>
        <position position="494"/>
    </location>
    <ligand>
        <name>Mg(2+)</name>
        <dbReference type="ChEBI" id="CHEBI:18420"/>
    </ligand>
</feature>
<feature type="modified residue" description="N6-carboxylysine" evidence="1">
    <location>
        <position position="124"/>
    </location>
</feature>
<reference key="1">
    <citation type="submission" date="2006-09" db="EMBL/GenBank/DDBJ databases">
        <title>Complete sequence of chromosome 1 of Shewanella sp. ANA-3.</title>
        <authorList>
            <person name="Copeland A."/>
            <person name="Lucas S."/>
            <person name="Lapidus A."/>
            <person name="Barry K."/>
            <person name="Detter J.C."/>
            <person name="Glavina del Rio T."/>
            <person name="Hammon N."/>
            <person name="Israni S."/>
            <person name="Dalin E."/>
            <person name="Tice H."/>
            <person name="Pitluck S."/>
            <person name="Chertkov O."/>
            <person name="Brettin T."/>
            <person name="Bruce D."/>
            <person name="Han C."/>
            <person name="Tapia R."/>
            <person name="Gilna P."/>
            <person name="Schmutz J."/>
            <person name="Larimer F."/>
            <person name="Land M."/>
            <person name="Hauser L."/>
            <person name="Kyrpides N."/>
            <person name="Kim E."/>
            <person name="Newman D."/>
            <person name="Salticov C."/>
            <person name="Konstantinidis K."/>
            <person name="Klappenback J."/>
            <person name="Tiedje J."/>
            <person name="Richardson P."/>
        </authorList>
    </citation>
    <scope>NUCLEOTIDE SEQUENCE [LARGE SCALE GENOMIC DNA]</scope>
    <source>
        <strain>ANA-3</strain>
    </source>
</reference>
<name>ILVD_SHESA</name>
<accession>A0KS32</accession>
<gene>
    <name evidence="1" type="primary">ilvD</name>
    <name type="ordered locus">Shewana3_0358</name>
</gene>
<proteinExistence type="inferred from homology"/>
<evidence type="ECO:0000255" key="1">
    <source>
        <dbReference type="HAMAP-Rule" id="MF_00012"/>
    </source>
</evidence>
<sequence length="619" mass="65614">MPKLRSATSTEGRNMAGARALWRATGVKDNDFGKPIIAIANSFTQFVPGHVHLKDMGSLVADAIEEAGGIAKEFNTIAVDDGIAMGHGGMLYSLPSRELIADSVEYMVNAHCADALVCISNCDKITPGMLMAALRLNIPVVFVSGGPMEAGKTKLSDKLIKLDLVDAMVAAADSSVSDEDSAKIERSACPTCGSCSGMFTANSMNCLTEALGLSLPGNGSMLATHADRRELFLEAGRRVMALTKRYYEQDDASALPRNIASFKAFENAMALDIAMGGSSNTVLHLLAAAQEADVAFTMDDIDRMSRQVPHLCKVAPSTAKYHMEDVHRAGGVMGILGELDRAGLLHTDVPHVAADAGGNLKSVLAKYDVMQTQDDKVKQFFMAGPAGIPTTKAFSQDCRWPSLDDDRREGCIRSREFAFSQEGGLAVLSGNLADNGCIVKTAGVDESNLTFIGSARVYESQDDAVAGILGGEVVAGDVVVIRYEGPKGGPGMQEMLYPTSYLKSRGLGKACALITDGRFSGGTSGLSIGHVSPEAAAGGTIALIENGDRIEIDIPKRSIKLAVSDAELAARRETMLARGPMAWKPLSRQRYVSMALKAYAMLATSADKGAVRDRSKLED</sequence>
<comment type="function">
    <text evidence="1">Functions in the biosynthesis of branched-chain amino acids. Catalyzes the dehydration of (2R,3R)-2,3-dihydroxy-3-methylpentanoate (2,3-dihydroxy-3-methylvalerate) into 2-oxo-3-methylpentanoate (2-oxo-3-methylvalerate) and of (2R)-2,3-dihydroxy-3-methylbutanoate (2,3-dihydroxyisovalerate) into 2-oxo-3-methylbutanoate (2-oxoisovalerate), the penultimate precursor to L-isoleucine and L-valine, respectively.</text>
</comment>
<comment type="catalytic activity">
    <reaction evidence="1">
        <text>(2R)-2,3-dihydroxy-3-methylbutanoate = 3-methyl-2-oxobutanoate + H2O</text>
        <dbReference type="Rhea" id="RHEA:24809"/>
        <dbReference type="ChEBI" id="CHEBI:11851"/>
        <dbReference type="ChEBI" id="CHEBI:15377"/>
        <dbReference type="ChEBI" id="CHEBI:49072"/>
        <dbReference type="EC" id="4.2.1.9"/>
    </reaction>
    <physiologicalReaction direction="left-to-right" evidence="1">
        <dbReference type="Rhea" id="RHEA:24810"/>
    </physiologicalReaction>
</comment>
<comment type="catalytic activity">
    <reaction evidence="1">
        <text>(2R,3R)-2,3-dihydroxy-3-methylpentanoate = (S)-3-methyl-2-oxopentanoate + H2O</text>
        <dbReference type="Rhea" id="RHEA:27694"/>
        <dbReference type="ChEBI" id="CHEBI:15377"/>
        <dbReference type="ChEBI" id="CHEBI:35146"/>
        <dbReference type="ChEBI" id="CHEBI:49258"/>
        <dbReference type="EC" id="4.2.1.9"/>
    </reaction>
    <physiologicalReaction direction="left-to-right" evidence="1">
        <dbReference type="Rhea" id="RHEA:27695"/>
    </physiologicalReaction>
</comment>
<comment type="cofactor">
    <cofactor evidence="1">
        <name>[2Fe-2S] cluster</name>
        <dbReference type="ChEBI" id="CHEBI:190135"/>
    </cofactor>
    <text evidence="1">Binds 1 [2Fe-2S] cluster per subunit. This cluster acts as a Lewis acid cofactor.</text>
</comment>
<comment type="cofactor">
    <cofactor evidence="1">
        <name>Mg(2+)</name>
        <dbReference type="ChEBI" id="CHEBI:18420"/>
    </cofactor>
</comment>
<comment type="pathway">
    <text evidence="1">Amino-acid biosynthesis; L-isoleucine biosynthesis; L-isoleucine from 2-oxobutanoate: step 3/4.</text>
</comment>
<comment type="pathway">
    <text evidence="1">Amino-acid biosynthesis; L-valine biosynthesis; L-valine from pyruvate: step 3/4.</text>
</comment>
<comment type="subunit">
    <text evidence="1">Homodimer.</text>
</comment>
<comment type="similarity">
    <text evidence="1">Belongs to the IlvD/Edd family.</text>
</comment>
<dbReference type="EC" id="4.2.1.9" evidence="1"/>
<dbReference type="EMBL" id="CP000469">
    <property type="protein sequence ID" value="ABK46601.1"/>
    <property type="molecule type" value="Genomic_DNA"/>
</dbReference>
<dbReference type="RefSeq" id="WP_011715587.1">
    <property type="nucleotide sequence ID" value="NC_008577.1"/>
</dbReference>
<dbReference type="SMR" id="A0KS32"/>
<dbReference type="STRING" id="94122.Shewana3_0358"/>
<dbReference type="KEGG" id="shn:Shewana3_0358"/>
<dbReference type="eggNOG" id="COG0129">
    <property type="taxonomic scope" value="Bacteria"/>
</dbReference>
<dbReference type="HOGENOM" id="CLU_014271_4_2_6"/>
<dbReference type="OrthoDB" id="9807077at2"/>
<dbReference type="UniPathway" id="UPA00047">
    <property type="reaction ID" value="UER00057"/>
</dbReference>
<dbReference type="UniPathway" id="UPA00049">
    <property type="reaction ID" value="UER00061"/>
</dbReference>
<dbReference type="Proteomes" id="UP000002589">
    <property type="component" value="Chromosome"/>
</dbReference>
<dbReference type="GO" id="GO:0005829">
    <property type="term" value="C:cytosol"/>
    <property type="evidence" value="ECO:0007669"/>
    <property type="project" value="TreeGrafter"/>
</dbReference>
<dbReference type="GO" id="GO:0051537">
    <property type="term" value="F:2 iron, 2 sulfur cluster binding"/>
    <property type="evidence" value="ECO:0007669"/>
    <property type="project" value="UniProtKB-UniRule"/>
</dbReference>
<dbReference type="GO" id="GO:0004160">
    <property type="term" value="F:dihydroxy-acid dehydratase activity"/>
    <property type="evidence" value="ECO:0007669"/>
    <property type="project" value="UniProtKB-UniRule"/>
</dbReference>
<dbReference type="GO" id="GO:0000287">
    <property type="term" value="F:magnesium ion binding"/>
    <property type="evidence" value="ECO:0007669"/>
    <property type="project" value="UniProtKB-UniRule"/>
</dbReference>
<dbReference type="GO" id="GO:0009097">
    <property type="term" value="P:isoleucine biosynthetic process"/>
    <property type="evidence" value="ECO:0007669"/>
    <property type="project" value="UniProtKB-UniRule"/>
</dbReference>
<dbReference type="GO" id="GO:0009099">
    <property type="term" value="P:L-valine biosynthetic process"/>
    <property type="evidence" value="ECO:0007669"/>
    <property type="project" value="UniProtKB-UniRule"/>
</dbReference>
<dbReference type="FunFam" id="3.50.30.80:FF:000001">
    <property type="entry name" value="Dihydroxy-acid dehydratase"/>
    <property type="match status" value="1"/>
</dbReference>
<dbReference type="Gene3D" id="3.50.30.80">
    <property type="entry name" value="IlvD/EDD C-terminal domain-like"/>
    <property type="match status" value="1"/>
</dbReference>
<dbReference type="HAMAP" id="MF_00012">
    <property type="entry name" value="IlvD"/>
    <property type="match status" value="1"/>
</dbReference>
<dbReference type="InterPro" id="IPR042096">
    <property type="entry name" value="Dihydro-acid_dehy_C"/>
</dbReference>
<dbReference type="InterPro" id="IPR004404">
    <property type="entry name" value="DihydroxyA_deHydtase"/>
</dbReference>
<dbReference type="InterPro" id="IPR020558">
    <property type="entry name" value="DiOHA_6PGluconate_deHydtase_CS"/>
</dbReference>
<dbReference type="InterPro" id="IPR056740">
    <property type="entry name" value="ILV_EDD_C"/>
</dbReference>
<dbReference type="InterPro" id="IPR000581">
    <property type="entry name" value="ILV_EDD_N"/>
</dbReference>
<dbReference type="InterPro" id="IPR037237">
    <property type="entry name" value="IlvD/EDD_N"/>
</dbReference>
<dbReference type="NCBIfam" id="TIGR00110">
    <property type="entry name" value="ilvD"/>
    <property type="match status" value="1"/>
</dbReference>
<dbReference type="NCBIfam" id="NF009103">
    <property type="entry name" value="PRK12448.1"/>
    <property type="match status" value="1"/>
</dbReference>
<dbReference type="PANTHER" id="PTHR43661">
    <property type="entry name" value="D-XYLONATE DEHYDRATASE"/>
    <property type="match status" value="1"/>
</dbReference>
<dbReference type="PANTHER" id="PTHR43661:SF3">
    <property type="entry name" value="D-XYLONATE DEHYDRATASE YAGF-RELATED"/>
    <property type="match status" value="1"/>
</dbReference>
<dbReference type="Pfam" id="PF24877">
    <property type="entry name" value="ILV_EDD_C"/>
    <property type="match status" value="1"/>
</dbReference>
<dbReference type="Pfam" id="PF00920">
    <property type="entry name" value="ILVD_EDD_N"/>
    <property type="match status" value="1"/>
</dbReference>
<dbReference type="SUPFAM" id="SSF143975">
    <property type="entry name" value="IlvD/EDD N-terminal domain-like"/>
    <property type="match status" value="1"/>
</dbReference>
<dbReference type="SUPFAM" id="SSF52016">
    <property type="entry name" value="LeuD/IlvD-like"/>
    <property type="match status" value="1"/>
</dbReference>
<dbReference type="PROSITE" id="PS00886">
    <property type="entry name" value="ILVD_EDD_1"/>
    <property type="match status" value="1"/>
</dbReference>
<dbReference type="PROSITE" id="PS00887">
    <property type="entry name" value="ILVD_EDD_2"/>
    <property type="match status" value="1"/>
</dbReference>
<keyword id="KW-0001">2Fe-2S</keyword>
<keyword id="KW-0028">Amino-acid biosynthesis</keyword>
<keyword id="KW-0100">Branched-chain amino acid biosynthesis</keyword>
<keyword id="KW-0408">Iron</keyword>
<keyword id="KW-0411">Iron-sulfur</keyword>
<keyword id="KW-0456">Lyase</keyword>
<keyword id="KW-0460">Magnesium</keyword>
<keyword id="KW-0479">Metal-binding</keyword>